<name>TUSA_PSEPG</name>
<dbReference type="EMBL" id="CP000926">
    <property type="protein sequence ID" value="ABY97559.1"/>
    <property type="molecule type" value="Genomic_DNA"/>
</dbReference>
<dbReference type="RefSeq" id="WP_012271322.1">
    <property type="nucleotide sequence ID" value="NC_010322.1"/>
</dbReference>
<dbReference type="SMR" id="B0KGD8"/>
<dbReference type="KEGG" id="ppg:PputGB1_1656"/>
<dbReference type="eggNOG" id="COG0425">
    <property type="taxonomic scope" value="Bacteria"/>
</dbReference>
<dbReference type="HOGENOM" id="CLU_165255_5_1_6"/>
<dbReference type="Proteomes" id="UP000002157">
    <property type="component" value="Chromosome"/>
</dbReference>
<dbReference type="GO" id="GO:0005737">
    <property type="term" value="C:cytoplasm"/>
    <property type="evidence" value="ECO:0007669"/>
    <property type="project" value="UniProtKB-SubCell"/>
</dbReference>
<dbReference type="GO" id="GO:0097163">
    <property type="term" value="F:sulfur carrier activity"/>
    <property type="evidence" value="ECO:0007669"/>
    <property type="project" value="UniProtKB-UniRule"/>
</dbReference>
<dbReference type="GO" id="GO:0002143">
    <property type="term" value="P:tRNA wobble position uridine thiolation"/>
    <property type="evidence" value="ECO:0007669"/>
    <property type="project" value="InterPro"/>
</dbReference>
<dbReference type="CDD" id="cd03423">
    <property type="entry name" value="SirA"/>
    <property type="match status" value="1"/>
</dbReference>
<dbReference type="Gene3D" id="3.30.110.40">
    <property type="entry name" value="TusA-like domain"/>
    <property type="match status" value="1"/>
</dbReference>
<dbReference type="HAMAP" id="MF_00413">
    <property type="entry name" value="Thiourid_synth_A"/>
    <property type="match status" value="1"/>
</dbReference>
<dbReference type="InterPro" id="IPR022931">
    <property type="entry name" value="Sulphur_carrier_TusA"/>
</dbReference>
<dbReference type="InterPro" id="IPR001455">
    <property type="entry name" value="TusA-like"/>
</dbReference>
<dbReference type="InterPro" id="IPR036868">
    <property type="entry name" value="TusA-like_sf"/>
</dbReference>
<dbReference type="NCBIfam" id="NF001423">
    <property type="entry name" value="PRK00299.1"/>
    <property type="match status" value="1"/>
</dbReference>
<dbReference type="PANTHER" id="PTHR33279:SF2">
    <property type="entry name" value="SULFUR CARRIER PROTEIN TUSA"/>
    <property type="match status" value="1"/>
</dbReference>
<dbReference type="PANTHER" id="PTHR33279">
    <property type="entry name" value="SULFUR CARRIER PROTEIN YEDF-RELATED"/>
    <property type="match status" value="1"/>
</dbReference>
<dbReference type="Pfam" id="PF01206">
    <property type="entry name" value="TusA"/>
    <property type="match status" value="1"/>
</dbReference>
<dbReference type="SUPFAM" id="SSF64307">
    <property type="entry name" value="SirA-like"/>
    <property type="match status" value="1"/>
</dbReference>
<dbReference type="PROSITE" id="PS01148">
    <property type="entry name" value="UPF0033"/>
    <property type="match status" value="1"/>
</dbReference>
<reference key="1">
    <citation type="submission" date="2008-01" db="EMBL/GenBank/DDBJ databases">
        <title>Complete sequence of Pseudomonas putida GB-1.</title>
        <authorList>
            <consortium name="US DOE Joint Genome Institute"/>
            <person name="Copeland A."/>
            <person name="Lucas S."/>
            <person name="Lapidus A."/>
            <person name="Barry K."/>
            <person name="Glavina del Rio T."/>
            <person name="Dalin E."/>
            <person name="Tice H."/>
            <person name="Pitluck S."/>
            <person name="Bruce D."/>
            <person name="Goodwin L."/>
            <person name="Chertkov O."/>
            <person name="Brettin T."/>
            <person name="Detter J.C."/>
            <person name="Han C."/>
            <person name="Kuske C.R."/>
            <person name="Schmutz J."/>
            <person name="Larimer F."/>
            <person name="Land M."/>
            <person name="Hauser L."/>
            <person name="Kyrpides N."/>
            <person name="Kim E."/>
            <person name="McCarthy J.K."/>
            <person name="Richardson P."/>
        </authorList>
    </citation>
    <scope>NUCLEOTIDE SEQUENCE [LARGE SCALE GENOMIC DNA]</scope>
    <source>
        <strain>GB-1</strain>
    </source>
</reference>
<accession>B0KGD8</accession>
<evidence type="ECO:0000255" key="1">
    <source>
        <dbReference type="HAMAP-Rule" id="MF_00413"/>
    </source>
</evidence>
<protein>
    <recommendedName>
        <fullName evidence="1">Sulfur carrier protein TusA</fullName>
    </recommendedName>
</protein>
<organism>
    <name type="scientific">Pseudomonas putida (strain GB-1)</name>
    <dbReference type="NCBI Taxonomy" id="76869"/>
    <lineage>
        <taxon>Bacteria</taxon>
        <taxon>Pseudomonadati</taxon>
        <taxon>Pseudomonadota</taxon>
        <taxon>Gammaproteobacteria</taxon>
        <taxon>Pseudomonadales</taxon>
        <taxon>Pseudomonadaceae</taxon>
        <taxon>Pseudomonas</taxon>
    </lineage>
</organism>
<proteinExistence type="inferred from homology"/>
<comment type="function">
    <text evidence="1">Sulfur carrier protein which probably makes part of a sulfur-relay system.</text>
</comment>
<comment type="subcellular location">
    <subcellularLocation>
        <location evidence="1">Cytoplasm</location>
    </subcellularLocation>
</comment>
<comment type="similarity">
    <text evidence="1">Belongs to the sulfur carrier protein TusA family.</text>
</comment>
<sequence>MTDFTPDAVLDATGLNCPEPVMMLHQHVRNLAAGGLLKVIATDPSTRRDIPKFCNFLGHELLQQQEDAGTFLYWIRKKAD</sequence>
<feature type="chain" id="PRO_1000080496" description="Sulfur carrier protein TusA">
    <location>
        <begin position="1"/>
        <end position="80"/>
    </location>
</feature>
<feature type="active site" description="Cysteine persulfide intermediate" evidence="1">
    <location>
        <position position="17"/>
    </location>
</feature>
<gene>
    <name evidence="1" type="primary">tusA</name>
    <name type="ordered locus">PputGB1_1656</name>
</gene>
<keyword id="KW-0963">Cytoplasm</keyword>